<gene>
    <name evidence="3" type="primary">aneC</name>
    <name type="ORF">ASPACDRAFT_60731</name>
</gene>
<evidence type="ECO:0000250" key="1">
    <source>
        <dbReference type="UniProtKB" id="Q9UR08"/>
    </source>
</evidence>
<evidence type="ECO:0000269" key="2">
    <source>
    </source>
</evidence>
<evidence type="ECO:0000303" key="3">
    <source>
    </source>
</evidence>
<evidence type="ECO:0000305" key="4"/>
<comment type="function">
    <text evidence="2">Terpene cyclase; part of the gene cluster that mediates the biosynthesis of aculenes, a unique type of norsesquiterpenes that contain a nordaucane skeleton linked to an L-proline moiety and are of mixed biosynthetic origin (PubMed:31618514). The pathway begins with the synthesis of dauca-4,7-diene by the terpene cyclase aneC using farnesyl pyrophosphate (FPP) as substrate (PubMed:31618514). The cytochrome P450 monooxygenase aneF then performs the initial oxidation at C-12 of dauca-4,7-diene to yield asperaculane D (PubMed:31618514). Asperaculane D is substrate of the cytochrome P450 monooxygenase aneD for C-10 hydroxylation to yield asperaculane E (PubMed:31618514). The cytochrome P450 monooxygenase aneG then converts asperaculane E into aculene D via C-2 oxidation (PubMed:31618514). The monomodular nonribosomal peptide synthtase aneB adenylates L-proline and the thiohydrolase aneE transfers this activated L-proline derivative to aculenes D and C to produce respectively aculenes B and A (PubMed:31618514). The dioxygenase aneA converts aculene D into aculene C, and aculene B into aculene A by introducing the 5,6-alkene moiety (PubMed:31618514). Asperculanes A, B, C and F, as well as 14-prolyl asperculane C, might be shunt products of the pathway (PubMed:31618514).</text>
</comment>
<comment type="catalytic activity">
    <reaction evidence="2">
        <text>(2E,6E)-farnesyl diphosphate = dauca-4,7-diene + diphosphate</text>
        <dbReference type="Rhea" id="RHEA:65072"/>
        <dbReference type="ChEBI" id="CHEBI:33019"/>
        <dbReference type="ChEBI" id="CHEBI:155906"/>
        <dbReference type="ChEBI" id="CHEBI:175763"/>
    </reaction>
    <physiologicalReaction direction="left-to-right" evidence="2">
        <dbReference type="Rhea" id="RHEA:65073"/>
    </physiologicalReaction>
</comment>
<comment type="cofactor">
    <cofactor evidence="1">
        <name>Mg(2+)</name>
        <dbReference type="ChEBI" id="CHEBI:18420"/>
    </cofactor>
    <text evidence="1">Binds 3 Mg(2+) ions per monomer.</text>
</comment>
<comment type="pathway">
    <text evidence="2">Secondary metabolite biosynthesis.</text>
</comment>
<comment type="subunit">
    <text evidence="1">Homodimer.</text>
</comment>
<comment type="disruption phenotype">
    <text evidence="2">Impairs the production of aculene or any intermediates.</text>
</comment>
<comment type="similarity">
    <text evidence="4">Belongs to the terpene synthase family.</text>
</comment>
<sequence length="442" mass="50834">MTPDLVARFWLVELHVRLPAWLRGITSASASVAVKRPGSSKKPLEPAPQPAPYKPTHYRHIIYAYDVMEEKCEIPVLEHDPFDFLDPQKTLVPPENTILIDPVAVGLPWFSTMKGTPQCIHWREAEAAGLELIEQVMAARGAGAVIPEKLKTSDQRRKMMELVETAVTICIYLYAVSDAARIRVLTKSIVFLFLHDDVMESKANAEGNSILEGWDTDTFKANELEGESRNDIFLDFCREAIALDPVLGLELMQDTVRWARYSRVNSTKADKTHATWQDFRDFRELDIAYDFMITAVRFGAAILYDPAERPVFEWIEKLYIRHCLYINDLYSYEKEFREHQQEGAPLHNSVHMIEQVLSVPPGSAKAILRSVLWDCERQVREEYVRLMQLPELTHTQKVYLQRLIESFAGNYMYSMSTYRYARLSGKLIGPPPEDCLLKNYVQ</sequence>
<name>ANEC_ASPA1</name>
<reference key="1">
    <citation type="journal article" date="2017" name="Genome Biol.">
        <title>Comparative genomics reveals high biological diversity and specific adaptations in the industrially and medically important fungal genus Aspergillus.</title>
        <authorList>
            <person name="de Vries R.P."/>
            <person name="Riley R."/>
            <person name="Wiebenga A."/>
            <person name="Aguilar-Osorio G."/>
            <person name="Amillis S."/>
            <person name="Uchima C.A."/>
            <person name="Anderluh G."/>
            <person name="Asadollahi M."/>
            <person name="Askin M."/>
            <person name="Barry K."/>
            <person name="Battaglia E."/>
            <person name="Bayram O."/>
            <person name="Benocci T."/>
            <person name="Braus-Stromeyer S.A."/>
            <person name="Caldana C."/>
            <person name="Canovas D."/>
            <person name="Cerqueira G.C."/>
            <person name="Chen F."/>
            <person name="Chen W."/>
            <person name="Choi C."/>
            <person name="Clum A."/>
            <person name="Dos Santos R.A."/>
            <person name="Damasio A.R."/>
            <person name="Diallinas G."/>
            <person name="Emri T."/>
            <person name="Fekete E."/>
            <person name="Flipphi M."/>
            <person name="Freyberg S."/>
            <person name="Gallo A."/>
            <person name="Gournas C."/>
            <person name="Habgood R."/>
            <person name="Hainaut M."/>
            <person name="Harispe M.L."/>
            <person name="Henrissat B."/>
            <person name="Hilden K.S."/>
            <person name="Hope R."/>
            <person name="Hossain A."/>
            <person name="Karabika E."/>
            <person name="Karaffa L."/>
            <person name="Karanyi Z."/>
            <person name="Krasevec N."/>
            <person name="Kuo A."/>
            <person name="Kusch H."/>
            <person name="LaButti K."/>
            <person name="Lagendijk E.L."/>
            <person name="Lapidus A."/>
            <person name="Levasseur A."/>
            <person name="Lindquist E."/>
            <person name="Lipzen A."/>
            <person name="Logrieco A.F."/>
            <person name="MacCabe A."/>
            <person name="Maekelae M.R."/>
            <person name="Malavazi I."/>
            <person name="Melin P."/>
            <person name="Meyer V."/>
            <person name="Mielnichuk N."/>
            <person name="Miskei M."/>
            <person name="Molnar A.P."/>
            <person name="Mule G."/>
            <person name="Ngan C.Y."/>
            <person name="Orejas M."/>
            <person name="Orosz E."/>
            <person name="Ouedraogo J.P."/>
            <person name="Overkamp K.M."/>
            <person name="Park H.-S."/>
            <person name="Perrone G."/>
            <person name="Piumi F."/>
            <person name="Punt P.J."/>
            <person name="Ram A.F."/>
            <person name="Ramon A."/>
            <person name="Rauscher S."/>
            <person name="Record E."/>
            <person name="Riano-Pachon D.M."/>
            <person name="Robert V."/>
            <person name="Roehrig J."/>
            <person name="Ruller R."/>
            <person name="Salamov A."/>
            <person name="Salih N.S."/>
            <person name="Samson R.A."/>
            <person name="Sandor E."/>
            <person name="Sanguinetti M."/>
            <person name="Schuetze T."/>
            <person name="Sepcic K."/>
            <person name="Shelest E."/>
            <person name="Sherlock G."/>
            <person name="Sophianopoulou V."/>
            <person name="Squina F.M."/>
            <person name="Sun H."/>
            <person name="Susca A."/>
            <person name="Todd R.B."/>
            <person name="Tsang A."/>
            <person name="Unkles S.E."/>
            <person name="van de Wiele N."/>
            <person name="van Rossen-Uffink D."/>
            <person name="Oliveira J.V."/>
            <person name="Vesth T.C."/>
            <person name="Visser J."/>
            <person name="Yu J.-H."/>
            <person name="Zhou M."/>
            <person name="Andersen M.R."/>
            <person name="Archer D.B."/>
            <person name="Baker S.E."/>
            <person name="Benoit I."/>
            <person name="Brakhage A.A."/>
            <person name="Braus G.H."/>
            <person name="Fischer R."/>
            <person name="Frisvad J.C."/>
            <person name="Goldman G.H."/>
            <person name="Houbraken J."/>
            <person name="Oakley B."/>
            <person name="Pocsi I."/>
            <person name="Scazzocchio C."/>
            <person name="Seiboth B."/>
            <person name="vanKuyk P.A."/>
            <person name="Wortman J."/>
            <person name="Dyer P.S."/>
            <person name="Grigoriev I.V."/>
        </authorList>
    </citation>
    <scope>NUCLEOTIDE SEQUENCE [LARGE SCALE GENOMIC DNA]</scope>
    <source>
        <strain>ATCC 16872 / CBS 172.66 / WB 5094</strain>
    </source>
</reference>
<reference key="2">
    <citation type="journal article" date="2019" name="Angew. Chem. Int. Ed.">
        <title>The biosynthesis of norsesquiterpene aculenes requires three cytochrome P450 enzymes to catalyze a stepwise demethylation process.</title>
        <authorList>
            <person name="Lee C.F."/>
            <person name="Chen L.X."/>
            <person name="Chiang C.Y."/>
            <person name="Lai C.Y."/>
            <person name="Lin H.C."/>
        </authorList>
    </citation>
    <scope>FUNCTION</scope>
    <scope>DISRUPTION PHENOTYPE</scope>
    <scope>CATALYTIC ACTIVITY</scope>
    <scope>PATHWAY</scope>
</reference>
<accession>A0A1L9WUI2</accession>
<dbReference type="EC" id="4.2.3.-" evidence="2"/>
<dbReference type="EMBL" id="KV878977">
    <property type="protein sequence ID" value="OJJ99914.1"/>
    <property type="molecule type" value="Genomic_DNA"/>
</dbReference>
<dbReference type="RefSeq" id="XP_020056254.1">
    <property type="nucleotide sequence ID" value="XM_020203588.1"/>
</dbReference>
<dbReference type="SMR" id="A0A1L9WUI2"/>
<dbReference type="GeneID" id="30977402"/>
<dbReference type="VEuPathDB" id="FungiDB:ASPACDRAFT_60731"/>
<dbReference type="OMA" id="CCAYLYP"/>
<dbReference type="OrthoDB" id="3004402at2759"/>
<dbReference type="Proteomes" id="UP000184546">
    <property type="component" value="Unassembled WGS sequence"/>
</dbReference>
<dbReference type="GO" id="GO:0016829">
    <property type="term" value="F:lyase activity"/>
    <property type="evidence" value="ECO:0007669"/>
    <property type="project" value="UniProtKB-KW"/>
</dbReference>
<dbReference type="GO" id="GO:0046872">
    <property type="term" value="F:metal ion binding"/>
    <property type="evidence" value="ECO:0007669"/>
    <property type="project" value="UniProtKB-KW"/>
</dbReference>
<dbReference type="Gene3D" id="1.10.600.10">
    <property type="entry name" value="Farnesyl Diphosphate Synthase"/>
    <property type="match status" value="1"/>
</dbReference>
<dbReference type="InterPro" id="IPR008949">
    <property type="entry name" value="Isoprenoid_synthase_dom_sf"/>
</dbReference>
<dbReference type="Pfam" id="PF19086">
    <property type="entry name" value="Terpene_syn_C_2"/>
    <property type="match status" value="1"/>
</dbReference>
<dbReference type="SUPFAM" id="SSF48576">
    <property type="entry name" value="Terpenoid synthases"/>
    <property type="match status" value="1"/>
</dbReference>
<keyword id="KW-0456">Lyase</keyword>
<keyword id="KW-0460">Magnesium</keyword>
<keyword id="KW-0479">Metal-binding</keyword>
<keyword id="KW-1185">Reference proteome</keyword>
<proteinExistence type="evidence at protein level"/>
<feature type="chain" id="PRO_0000449092" description="Terpene cyclase aneC">
    <location>
        <begin position="1"/>
        <end position="442"/>
    </location>
</feature>
<feature type="binding site" evidence="1">
    <location>
        <position position="196"/>
    </location>
    <ligand>
        <name>Mg(2+)</name>
        <dbReference type="ChEBI" id="CHEBI:18420"/>
        <label>1</label>
    </ligand>
</feature>
<feature type="binding site" evidence="1">
    <location>
        <position position="196"/>
    </location>
    <ligand>
        <name>Mg(2+)</name>
        <dbReference type="ChEBI" id="CHEBI:18420"/>
        <label>2</label>
    </ligand>
</feature>
<feature type="binding site" evidence="1">
    <location>
        <position position="327"/>
    </location>
    <ligand>
        <name>Mg(2+)</name>
        <dbReference type="ChEBI" id="CHEBI:18420"/>
        <label>3</label>
    </ligand>
</feature>
<feature type="binding site" evidence="1">
    <location>
        <position position="331"/>
    </location>
    <ligand>
        <name>Mg(2+)</name>
        <dbReference type="ChEBI" id="CHEBI:18420"/>
        <label>3</label>
    </ligand>
</feature>
<feature type="binding site" evidence="1">
    <location>
        <position position="335"/>
    </location>
    <ligand>
        <name>Mg(2+)</name>
        <dbReference type="ChEBI" id="CHEBI:18420"/>
        <label>3</label>
    </ligand>
</feature>
<feature type="binding site" evidence="1">
    <location>
        <position position="419"/>
    </location>
    <ligand>
        <name>(2E,6E)-farnesyl diphosphate</name>
        <dbReference type="ChEBI" id="CHEBI:175763"/>
    </ligand>
</feature>
<feature type="binding site" evidence="1">
    <location>
        <position position="420"/>
    </location>
    <ligand>
        <name>(2E,6E)-farnesyl diphosphate</name>
        <dbReference type="ChEBI" id="CHEBI:175763"/>
    </ligand>
</feature>
<protein>
    <recommendedName>
        <fullName evidence="3">Terpene cyclase aneC</fullName>
        <ecNumber evidence="2">4.2.3.-</ecNumber>
    </recommendedName>
    <alternativeName>
        <fullName evidence="3">Aculenes biosynthesis cluster protein C</fullName>
    </alternativeName>
</protein>
<organism>
    <name type="scientific">Aspergillus aculeatus (strain ATCC 16872 / CBS 172.66 / WB 5094)</name>
    <dbReference type="NCBI Taxonomy" id="690307"/>
    <lineage>
        <taxon>Eukaryota</taxon>
        <taxon>Fungi</taxon>
        <taxon>Dikarya</taxon>
        <taxon>Ascomycota</taxon>
        <taxon>Pezizomycotina</taxon>
        <taxon>Eurotiomycetes</taxon>
        <taxon>Eurotiomycetidae</taxon>
        <taxon>Eurotiales</taxon>
        <taxon>Aspergillaceae</taxon>
        <taxon>Aspergillus</taxon>
        <taxon>Aspergillus subgen. Circumdati</taxon>
    </lineage>
</organism>